<evidence type="ECO:0000255" key="1">
    <source>
        <dbReference type="HAMAP-Rule" id="MF_00502"/>
    </source>
</evidence>
<evidence type="ECO:0000305" key="2"/>
<feature type="chain" id="PRO_0000173273" description="Large ribosomal subunit protein bL31B">
    <location>
        <begin position="1"/>
        <end position="86"/>
    </location>
</feature>
<protein>
    <recommendedName>
        <fullName evidence="1">Large ribosomal subunit protein bL31B</fullName>
    </recommendedName>
    <alternativeName>
        <fullName evidence="2">50S ribosomal protein L31 type B</fullName>
    </alternativeName>
</protein>
<accession>P0DE38</accession>
<accession>P66203</accession>
<accession>Q9A0L6</accession>
<keyword id="KW-0687">Ribonucleoprotein</keyword>
<keyword id="KW-0689">Ribosomal protein</keyword>
<comment type="subunit">
    <text evidence="1">Part of the 50S ribosomal subunit.</text>
</comment>
<comment type="similarity">
    <text evidence="1">Belongs to the bacterial ribosomal protein bL31 family. Type B subfamily.</text>
</comment>
<reference key="1">
    <citation type="journal article" date="2002" name="Proc. Natl. Acad. Sci. U.S.A.">
        <title>Genome sequence of a serotype M3 strain of group A Streptococcus: phage-encoded toxins, the high-virulence phenotype, and clone emergence.</title>
        <authorList>
            <person name="Beres S.B."/>
            <person name="Sylva G.L."/>
            <person name="Barbian K.D."/>
            <person name="Lei B."/>
            <person name="Hoff J.S."/>
            <person name="Mammarella N.D."/>
            <person name="Liu M.-Y."/>
            <person name="Smoot J.C."/>
            <person name="Porcella S.F."/>
            <person name="Parkins L.D."/>
            <person name="Campbell D.S."/>
            <person name="Smith T.M."/>
            <person name="McCormick J.K."/>
            <person name="Leung D.Y.M."/>
            <person name="Schlievert P.M."/>
            <person name="Musser J.M."/>
        </authorList>
    </citation>
    <scope>NUCLEOTIDE SEQUENCE [LARGE SCALE GENOMIC DNA]</scope>
    <source>
        <strain>ATCC BAA-595 / MGAS315</strain>
    </source>
</reference>
<sequence>MRKDIHPDYRPVVFLDTTTGYQFLSGSTKASKETVEFEGETYPLIRVEISSDSHPFYTGRQKFTQADGRVDRFNKKYGLKDANAAK</sequence>
<proteinExistence type="inferred from homology"/>
<dbReference type="EMBL" id="AE014074">
    <property type="protein sequence ID" value="AAM79076.1"/>
    <property type="molecule type" value="Genomic_DNA"/>
</dbReference>
<dbReference type="RefSeq" id="WP_002985307.1">
    <property type="nucleotide sequence ID" value="NC_004070.1"/>
</dbReference>
<dbReference type="SMR" id="P0DE38"/>
<dbReference type="KEGG" id="spg:SpyM3_0469"/>
<dbReference type="HOGENOM" id="CLU_114306_2_1_9"/>
<dbReference type="Proteomes" id="UP000000564">
    <property type="component" value="Chromosome"/>
</dbReference>
<dbReference type="GO" id="GO:1990904">
    <property type="term" value="C:ribonucleoprotein complex"/>
    <property type="evidence" value="ECO:0007669"/>
    <property type="project" value="UniProtKB-KW"/>
</dbReference>
<dbReference type="GO" id="GO:0005840">
    <property type="term" value="C:ribosome"/>
    <property type="evidence" value="ECO:0007669"/>
    <property type="project" value="UniProtKB-KW"/>
</dbReference>
<dbReference type="GO" id="GO:0003735">
    <property type="term" value="F:structural constituent of ribosome"/>
    <property type="evidence" value="ECO:0007669"/>
    <property type="project" value="InterPro"/>
</dbReference>
<dbReference type="GO" id="GO:0006412">
    <property type="term" value="P:translation"/>
    <property type="evidence" value="ECO:0007669"/>
    <property type="project" value="UniProtKB-UniRule"/>
</dbReference>
<dbReference type="Gene3D" id="4.10.830.30">
    <property type="entry name" value="Ribosomal protein L31"/>
    <property type="match status" value="1"/>
</dbReference>
<dbReference type="HAMAP" id="MF_00502">
    <property type="entry name" value="Ribosomal_bL31_2"/>
    <property type="match status" value="1"/>
</dbReference>
<dbReference type="InterPro" id="IPR034704">
    <property type="entry name" value="Ribosomal_bL28/bL31-like_sf"/>
</dbReference>
<dbReference type="InterPro" id="IPR002150">
    <property type="entry name" value="Ribosomal_bL31"/>
</dbReference>
<dbReference type="InterPro" id="IPR027493">
    <property type="entry name" value="Ribosomal_bL31_B"/>
</dbReference>
<dbReference type="InterPro" id="IPR042105">
    <property type="entry name" value="Ribosomal_bL31_sf"/>
</dbReference>
<dbReference type="NCBIfam" id="TIGR00105">
    <property type="entry name" value="L31"/>
    <property type="match status" value="1"/>
</dbReference>
<dbReference type="NCBIfam" id="NF002462">
    <property type="entry name" value="PRK01678.1"/>
    <property type="match status" value="1"/>
</dbReference>
<dbReference type="PANTHER" id="PTHR33280">
    <property type="entry name" value="50S RIBOSOMAL PROTEIN L31, CHLOROPLASTIC"/>
    <property type="match status" value="1"/>
</dbReference>
<dbReference type="PANTHER" id="PTHR33280:SF1">
    <property type="entry name" value="LARGE RIBOSOMAL SUBUNIT PROTEIN BL31C"/>
    <property type="match status" value="1"/>
</dbReference>
<dbReference type="Pfam" id="PF01197">
    <property type="entry name" value="Ribosomal_L31"/>
    <property type="match status" value="1"/>
</dbReference>
<dbReference type="PRINTS" id="PR01249">
    <property type="entry name" value="RIBOSOMALL31"/>
</dbReference>
<dbReference type="SUPFAM" id="SSF143800">
    <property type="entry name" value="L28p-like"/>
    <property type="match status" value="1"/>
</dbReference>
<dbReference type="PROSITE" id="PS01143">
    <property type="entry name" value="RIBOSOMAL_L31"/>
    <property type="match status" value="1"/>
</dbReference>
<gene>
    <name evidence="1" type="primary">rpmE2</name>
    <name type="synonym">rl31</name>
    <name type="synonym">rpmE</name>
    <name type="ordered locus">SpyM3_0469</name>
</gene>
<name>RL31B_STRP3</name>
<organism>
    <name type="scientific">Streptococcus pyogenes serotype M3 (strain ATCC BAA-595 / MGAS315)</name>
    <dbReference type="NCBI Taxonomy" id="198466"/>
    <lineage>
        <taxon>Bacteria</taxon>
        <taxon>Bacillati</taxon>
        <taxon>Bacillota</taxon>
        <taxon>Bacilli</taxon>
        <taxon>Lactobacillales</taxon>
        <taxon>Streptococcaceae</taxon>
        <taxon>Streptococcus</taxon>
    </lineage>
</organism>